<gene>
    <name type="ORF">B18R</name>
</gene>
<keyword id="KW-0040">ANK repeat</keyword>
<keyword id="KW-1185">Reference proteome</keyword>
<keyword id="KW-0677">Repeat</keyword>
<reference key="1">
    <citation type="journal article" date="1990" name="Virology">
        <title>The complete DNA sequence of vaccinia virus.</title>
        <authorList>
            <person name="Goebel S.J."/>
            <person name="Johnson G.P."/>
            <person name="Perkus M.E."/>
            <person name="Davis S.W."/>
            <person name="Winslow J.P."/>
            <person name="Paoletti E."/>
        </authorList>
    </citation>
    <scope>NUCLEOTIDE SEQUENCE [LARGE SCALE GENOMIC DNA]</scope>
</reference>
<reference key="2">
    <citation type="journal article" date="1990" name="Virology">
        <title>Appendix to 'The complete DNA sequence of vaccinia virus'.</title>
        <authorList>
            <person name="Goebel S.J."/>
            <person name="Johnson G.P."/>
            <person name="Perkus M.E."/>
            <person name="Davis S.W."/>
            <person name="Winslow J.P."/>
            <person name="Paoletti E."/>
        </authorList>
    </citation>
    <scope>COMPLETE GENOME</scope>
</reference>
<feature type="chain" id="PRO_0000067089" description="Ankyrin repeat protein B18">
    <location>
        <begin position="1"/>
        <end position="574"/>
    </location>
</feature>
<feature type="repeat" description="ANK 1">
    <location>
        <begin position="56"/>
        <end position="87"/>
    </location>
</feature>
<feature type="repeat" description="ANK 2">
    <location>
        <begin position="135"/>
        <end position="164"/>
    </location>
</feature>
<feature type="repeat" description="ANK 3">
    <location>
        <begin position="167"/>
        <end position="213"/>
    </location>
</feature>
<feature type="repeat" description="ANK 4">
    <location>
        <begin position="217"/>
        <end position="249"/>
    </location>
</feature>
<feature type="repeat" description="ANK 5">
    <location>
        <begin position="253"/>
        <end position="285"/>
    </location>
</feature>
<feature type="repeat" description="ANK 6">
    <location>
        <begin position="327"/>
        <end position="356"/>
    </location>
</feature>
<feature type="domain" description="F-box" evidence="1">
    <location>
        <begin position="541"/>
        <end position="574"/>
    </location>
</feature>
<proteinExistence type="predicted"/>
<evidence type="ECO:0000255" key="1">
    <source>
        <dbReference type="PROSITE-ProRule" id="PRU00080"/>
    </source>
</evidence>
<dbReference type="EMBL" id="M35027">
    <property type="protein sequence ID" value="AAA48217.1"/>
    <property type="molecule type" value="Genomic_DNA"/>
</dbReference>
<dbReference type="PIR" id="H42527">
    <property type="entry name" value="H42527"/>
</dbReference>
<dbReference type="SMR" id="P21076"/>
<dbReference type="Proteomes" id="UP000008269">
    <property type="component" value="Segment"/>
</dbReference>
<dbReference type="Gene3D" id="1.25.40.20">
    <property type="entry name" value="Ankyrin repeat-containing domain"/>
    <property type="match status" value="3"/>
</dbReference>
<dbReference type="InterPro" id="IPR051637">
    <property type="entry name" value="Ank_repeat_dom-contain_49"/>
</dbReference>
<dbReference type="InterPro" id="IPR002110">
    <property type="entry name" value="Ankyrin_rpt"/>
</dbReference>
<dbReference type="InterPro" id="IPR036770">
    <property type="entry name" value="Ankyrin_rpt-contain_sf"/>
</dbReference>
<dbReference type="InterPro" id="IPR001810">
    <property type="entry name" value="F-box_dom"/>
</dbReference>
<dbReference type="InterPro" id="IPR018272">
    <property type="entry name" value="PRANC_domain"/>
</dbReference>
<dbReference type="PANTHER" id="PTHR24180">
    <property type="entry name" value="CYCLIN-DEPENDENT KINASE INHIBITOR 2C-RELATED"/>
    <property type="match status" value="1"/>
</dbReference>
<dbReference type="PANTHER" id="PTHR24180:SF45">
    <property type="entry name" value="POLY [ADP-RIBOSE] POLYMERASE TANKYRASE"/>
    <property type="match status" value="1"/>
</dbReference>
<dbReference type="Pfam" id="PF00023">
    <property type="entry name" value="Ank"/>
    <property type="match status" value="1"/>
</dbReference>
<dbReference type="Pfam" id="PF13606">
    <property type="entry name" value="Ank_3"/>
    <property type="match status" value="1"/>
</dbReference>
<dbReference type="Pfam" id="PF09372">
    <property type="entry name" value="PRANC"/>
    <property type="match status" value="1"/>
</dbReference>
<dbReference type="SMART" id="SM00248">
    <property type="entry name" value="ANK"/>
    <property type="match status" value="6"/>
</dbReference>
<dbReference type="SUPFAM" id="SSF48403">
    <property type="entry name" value="Ankyrin repeat"/>
    <property type="match status" value="1"/>
</dbReference>
<dbReference type="PROSITE" id="PS50297">
    <property type="entry name" value="ANK_REP_REGION"/>
    <property type="match status" value="1"/>
</dbReference>
<dbReference type="PROSITE" id="PS50088">
    <property type="entry name" value="ANK_REPEAT"/>
    <property type="match status" value="1"/>
</dbReference>
<dbReference type="PROSITE" id="PS50181">
    <property type="entry name" value="FBOX"/>
    <property type="match status" value="1"/>
</dbReference>
<organismHost>
    <name type="scientific">Homo sapiens</name>
    <name type="common">Human</name>
    <dbReference type="NCBI Taxonomy" id="9606"/>
</organismHost>
<name>VB18_VACCC</name>
<protein>
    <recommendedName>
        <fullName>Ankyrin repeat protein B18</fullName>
    </recommendedName>
</protein>
<accession>P21076</accession>
<organism>
    <name type="scientific">Vaccinia virus (strain Copenhagen)</name>
    <name type="common">VACV</name>
    <dbReference type="NCBI Taxonomy" id="10249"/>
    <lineage>
        <taxon>Viruses</taxon>
        <taxon>Varidnaviria</taxon>
        <taxon>Bamfordvirae</taxon>
        <taxon>Nucleocytoviricota</taxon>
        <taxon>Pokkesviricetes</taxon>
        <taxon>Chitovirales</taxon>
        <taxon>Poxviridae</taxon>
        <taxon>Chordopoxvirinae</taxon>
        <taxon>Orthopoxvirus</taxon>
        <taxon>Vaccinia virus</taxon>
    </lineage>
</organism>
<sequence>MSRRLIYVLNINRKSTHKIQENEIYTYFSHCNIDHTSTELDFVVKNYDLNRRQHVTGYTALHCYLYNNYFTNDVLKILLNHDVNVTMKTSSGRMPVYILLTRCCNISHDVVIDMIDKDKNHLSHRDYSNLLLEYIKSRYMLLKEEDIDENIVSTLLDKGIDPNFKQDGYTALHYYYLCLAHVYKPGECRKPITIKKAKRIISLFIQHGANLNALDNCGNTPFHLYLSIEMCNNIHMTKMLLTFNPNFKICNNHGLTPILCYITSDYIQHDILVMLIHHYETNVGEMPIDERRMIVFEFIKTYSTRPADSITYLMNRFKNINIYTRYEGKTLLHVACEYNNTQVIDYLIRINGDINALTDNNKHATQLIIDNKENSPYTINCLLYILRYIVDKNVIRSLVDQLPSLPIFDIKSFEKFISYCILLDDTFYDRHVKNRDSKTYRYAFSKYMSFDKYDGIITKCHDETMLLKLSTVLDTTLYAVLRCHNSRKLRRYLTELKKYNNDKSFKIYSNIMNERYLNVYYKDMYVSKVYDKLFPVFTDKNCLLTLLPSEIIYEILYMLTINDLYNISYPPTKV</sequence>